<proteinExistence type="inferred from homology"/>
<gene>
    <name type="primary">NOP1</name>
    <name type="ordered locus">AER214C</name>
</gene>
<evidence type="ECO:0000250" key="1"/>
<evidence type="ECO:0000256" key="2">
    <source>
        <dbReference type="SAM" id="MobiDB-lite"/>
    </source>
</evidence>
<evidence type="ECO:0000305" key="3"/>
<organism>
    <name type="scientific">Eremothecium gossypii (strain ATCC 10895 / CBS 109.51 / FGSC 9923 / NRRL Y-1056)</name>
    <name type="common">Yeast</name>
    <name type="synonym">Ashbya gossypii</name>
    <dbReference type="NCBI Taxonomy" id="284811"/>
    <lineage>
        <taxon>Eukaryota</taxon>
        <taxon>Fungi</taxon>
        <taxon>Dikarya</taxon>
        <taxon>Ascomycota</taxon>
        <taxon>Saccharomycotina</taxon>
        <taxon>Saccharomycetes</taxon>
        <taxon>Saccharomycetales</taxon>
        <taxon>Saccharomycetaceae</taxon>
        <taxon>Eremothecium</taxon>
    </lineage>
</organism>
<protein>
    <recommendedName>
        <fullName>rRNA 2'-O-methyltransferase fibrillarin</fullName>
        <ecNumber>2.1.1.-</ecNumber>
    </recommendedName>
    <alternativeName>
        <fullName>Histone-glutamine methyltransferase</fullName>
    </alternativeName>
</protein>
<feature type="chain" id="PRO_0000148521" description="rRNA 2'-O-methyltransferase fibrillarin">
    <location>
        <begin position="1"/>
        <end position="326"/>
    </location>
</feature>
<feature type="region of interest" description="Disordered" evidence="2">
    <location>
        <begin position="1"/>
        <end position="84"/>
    </location>
</feature>
<feature type="compositionally biased region" description="Gly residues" evidence="2">
    <location>
        <begin position="7"/>
        <end position="83"/>
    </location>
</feature>
<feature type="binding site" evidence="1">
    <location>
        <begin position="180"/>
        <end position="181"/>
    </location>
    <ligand>
        <name>S-adenosyl-L-methionine</name>
        <dbReference type="ChEBI" id="CHEBI:59789"/>
    </ligand>
</feature>
<feature type="binding site" evidence="1">
    <location>
        <begin position="199"/>
        <end position="200"/>
    </location>
    <ligand>
        <name>S-adenosyl-L-methionine</name>
        <dbReference type="ChEBI" id="CHEBI:59789"/>
    </ligand>
</feature>
<feature type="binding site" evidence="1">
    <location>
        <begin position="224"/>
        <end position="225"/>
    </location>
    <ligand>
        <name>S-adenosyl-L-methionine</name>
        <dbReference type="ChEBI" id="CHEBI:59789"/>
    </ligand>
</feature>
<feature type="binding site" evidence="1">
    <location>
        <begin position="244"/>
        <end position="247"/>
    </location>
    <ligand>
        <name>S-adenosyl-L-methionine</name>
        <dbReference type="ChEBI" id="CHEBI:59789"/>
    </ligand>
</feature>
<feature type="modified residue" description="Asymmetric dimethylarginine" evidence="1">
    <location>
        <position position="8"/>
    </location>
</feature>
<feature type="modified residue" description="Asymmetric dimethylarginine" evidence="1">
    <location>
        <position position="11"/>
    </location>
</feature>
<feature type="modified residue" description="Asymmetric dimethylarginine" evidence="1">
    <location>
        <position position="15"/>
    </location>
</feature>
<feature type="modified residue" description="Asymmetric dimethylarginine" evidence="1">
    <location>
        <position position="19"/>
    </location>
</feature>
<feature type="modified residue" description="Asymmetric dimethylarginine" evidence="1">
    <location>
        <position position="23"/>
    </location>
</feature>
<feature type="modified residue" description="Asymmetric dimethylarginine" evidence="1">
    <location>
        <position position="26"/>
    </location>
</feature>
<feature type="modified residue" description="Asymmetric dimethylarginine" evidence="1">
    <location>
        <position position="32"/>
    </location>
</feature>
<feature type="modified residue" description="Asymmetric dimethylarginine" evidence="1">
    <location>
        <position position="36"/>
    </location>
</feature>
<feature type="modified residue" description="Asymmetric dimethylarginine" evidence="1">
    <location>
        <position position="39"/>
    </location>
</feature>
<feature type="modified residue" description="Asymmetric dimethylarginine" evidence="1">
    <location>
        <position position="45"/>
    </location>
</feature>
<feature type="modified residue" description="Asymmetric dimethylarginine" evidence="1">
    <location>
        <position position="49"/>
    </location>
</feature>
<feature type="modified residue" description="Asymmetric dimethylarginine" evidence="1">
    <location>
        <position position="55"/>
    </location>
</feature>
<feature type="modified residue" description="Asymmetric dimethylarginine" evidence="1">
    <location>
        <position position="59"/>
    </location>
</feature>
<feature type="modified residue" description="Asymmetric dimethylarginine" evidence="1">
    <location>
        <position position="63"/>
    </location>
</feature>
<feature type="modified residue" description="Asymmetric dimethylarginine" evidence="1">
    <location>
        <position position="67"/>
    </location>
</feature>
<feature type="modified residue" description="Asymmetric dimethylarginine" evidence="1">
    <location>
        <position position="71"/>
    </location>
</feature>
<feature type="modified residue" description="Asymmetric dimethylarginine" evidence="1">
    <location>
        <position position="74"/>
    </location>
</feature>
<feature type="modified residue" description="Asymmetric dimethylarginine" evidence="1">
    <location>
        <position position="78"/>
    </location>
</feature>
<comment type="function">
    <text evidence="1">S-adenosyl-L-methionine-dependent methyltransferase that has the ability to methylate both RNAs and proteins. Involved in pre-rRNA processing. Utilizes the methyl donor S-adenosyl-L-methionine to catalyze the site-specific 2'-hydroxyl methylation of ribose moieties in pre-ribosomal RNA. Site specificity is provided by a guide RNA that base pairs with the substrate. Methylation occurs at a characteristic distance from the sequence involved in base pairing with the guide RNA. Also acts as a protein methyltransferase by mediating methylation of 'Gln-105' of histone H2A (H2AQ105me), a modification that impairs binding of the FACT complex and is specifically present at 35S ribosomal DNA locus (By similarity).</text>
</comment>
<comment type="catalytic activity">
    <reaction>
        <text>L-glutaminyl-[histone H2A] + S-adenosyl-L-methionine = N(5)-methyl-L-glutaminyl-[histone H2A] + S-adenosyl-L-homocysteine + H(+)</text>
        <dbReference type="Rhea" id="RHEA:50904"/>
        <dbReference type="Rhea" id="RHEA-COMP:12837"/>
        <dbReference type="Rhea" id="RHEA-COMP:12839"/>
        <dbReference type="ChEBI" id="CHEBI:15378"/>
        <dbReference type="ChEBI" id="CHEBI:30011"/>
        <dbReference type="ChEBI" id="CHEBI:57856"/>
        <dbReference type="ChEBI" id="CHEBI:59789"/>
        <dbReference type="ChEBI" id="CHEBI:61891"/>
    </reaction>
</comment>
<comment type="subunit">
    <text evidence="1">Component of box C/D small nucleolar ribonucleoprotein (snoRNP) particles that contain SNU13, NOP1, SIK1/NOP56 and NOP58, plus a guide RNA.</text>
</comment>
<comment type="subcellular location">
    <subcellularLocation>
        <location evidence="1">Nucleus</location>
        <location evidence="1">Nucleolus</location>
    </subcellularLocation>
    <text evidence="1">Fibrillar region of the nucleolus.</text>
</comment>
<comment type="PTM">
    <text evidence="1">By homology to other fibrillarins, some or all of the N-terminal domain arginines are modified to asymmetric dimethylarginine (DMA).</text>
</comment>
<comment type="similarity">
    <text evidence="3">Belongs to the methyltransferase superfamily. Fibrillarin family.</text>
</comment>
<name>FBRL_EREGS</name>
<reference key="1">
    <citation type="journal article" date="2004" name="Science">
        <title>The Ashbya gossypii genome as a tool for mapping the ancient Saccharomyces cerevisiae genome.</title>
        <authorList>
            <person name="Dietrich F.S."/>
            <person name="Voegeli S."/>
            <person name="Brachat S."/>
            <person name="Lerch A."/>
            <person name="Gates K."/>
            <person name="Steiner S."/>
            <person name="Mohr C."/>
            <person name="Poehlmann R."/>
            <person name="Luedi P."/>
            <person name="Choi S."/>
            <person name="Wing R.A."/>
            <person name="Flavier A."/>
            <person name="Gaffney T.D."/>
            <person name="Philippsen P."/>
        </authorList>
    </citation>
    <scope>NUCLEOTIDE SEQUENCE [LARGE SCALE GENOMIC DNA]</scope>
    <source>
        <strain>ATCC 10895 / CBS 109.51 / FGSC 9923 / NRRL Y-1056</strain>
    </source>
</reference>
<reference key="2">
    <citation type="journal article" date="2013" name="G3 (Bethesda)">
        <title>Genomes of Ashbya fungi isolated from insects reveal four mating-type loci, numerous translocations, lack of transposons, and distinct gene duplications.</title>
        <authorList>
            <person name="Dietrich F.S."/>
            <person name="Voegeli S."/>
            <person name="Kuo S."/>
            <person name="Philippsen P."/>
        </authorList>
    </citation>
    <scope>GENOME REANNOTATION</scope>
    <source>
        <strain>ATCC 10895 / CBS 109.51 / FGSC 9923 / NRRL Y-1056</strain>
    </source>
</reference>
<sequence>MAFQPGSRGGRGGARGGARGGARGGRGGFGGRGGSRGGRGGFDSRGGARGGFGGRGGSRGGPRGGPRGGARGGRGGARGGAKGGAKVVIEPHKHAGVFIARGKEDLLVTKNVAPGESVYGEKRISVEEPASEEGVPPTKVEYRVWNPFRSKLAAGIMGGLDELFIAPGKKVLYLGAASGTSVSHVADVVGPEGLVYAVEFSHRPGRELISMAKKRPNVIPIIEDARHPQKYRMLIGMVDAVFADVAQPDQARIIALNSHMFLKDQGGVVISIKANCIDSTVDAETVFAREVQKLREEKIKPLEQLTLEPYERDHCIVIGRYMRSGL</sequence>
<keyword id="KW-0488">Methylation</keyword>
<keyword id="KW-0489">Methyltransferase</keyword>
<keyword id="KW-0539">Nucleus</keyword>
<keyword id="KW-1185">Reference proteome</keyword>
<keyword id="KW-0687">Ribonucleoprotein</keyword>
<keyword id="KW-0694">RNA-binding</keyword>
<keyword id="KW-0698">rRNA processing</keyword>
<keyword id="KW-0949">S-adenosyl-L-methionine</keyword>
<keyword id="KW-0808">Transferase</keyword>
<dbReference type="EC" id="2.1.1.-"/>
<dbReference type="EMBL" id="AE016818">
    <property type="protein sequence ID" value="AAS52895.1"/>
    <property type="molecule type" value="Genomic_DNA"/>
</dbReference>
<dbReference type="RefSeq" id="NP_985071.1">
    <property type="nucleotide sequence ID" value="NM_210425.1"/>
</dbReference>
<dbReference type="SMR" id="Q756P0"/>
<dbReference type="FunCoup" id="Q756P0">
    <property type="interactions" value="1179"/>
</dbReference>
<dbReference type="STRING" id="284811.Q756P0"/>
<dbReference type="EnsemblFungi" id="AAS52895">
    <property type="protein sequence ID" value="AAS52895"/>
    <property type="gene ID" value="AGOS_AER214C"/>
</dbReference>
<dbReference type="GeneID" id="4621281"/>
<dbReference type="KEGG" id="ago:AGOS_AER214C"/>
<dbReference type="eggNOG" id="KOG1596">
    <property type="taxonomic scope" value="Eukaryota"/>
</dbReference>
<dbReference type="HOGENOM" id="CLU_059055_1_0_1"/>
<dbReference type="InParanoid" id="Q756P0"/>
<dbReference type="OMA" id="WNPNKSK"/>
<dbReference type="OrthoDB" id="1859733at2759"/>
<dbReference type="Proteomes" id="UP000000591">
    <property type="component" value="Chromosome V"/>
</dbReference>
<dbReference type="GO" id="GO:0031428">
    <property type="term" value="C:box C/D methylation guide snoRNP complex"/>
    <property type="evidence" value="ECO:0000318"/>
    <property type="project" value="GO_Central"/>
</dbReference>
<dbReference type="GO" id="GO:0005730">
    <property type="term" value="C:nucleolus"/>
    <property type="evidence" value="ECO:0000318"/>
    <property type="project" value="GO_Central"/>
</dbReference>
<dbReference type="GO" id="GO:0032040">
    <property type="term" value="C:small-subunit processome"/>
    <property type="evidence" value="ECO:0000318"/>
    <property type="project" value="GO_Central"/>
</dbReference>
<dbReference type="GO" id="GO:1990259">
    <property type="term" value="F:histone H2AQ104 methyltransferase activity"/>
    <property type="evidence" value="ECO:0000318"/>
    <property type="project" value="GO_Central"/>
</dbReference>
<dbReference type="GO" id="GO:0003723">
    <property type="term" value="F:RNA binding"/>
    <property type="evidence" value="ECO:0000318"/>
    <property type="project" value="GO_Central"/>
</dbReference>
<dbReference type="GO" id="GO:0008649">
    <property type="term" value="F:rRNA methyltransferase activity"/>
    <property type="evidence" value="ECO:0000318"/>
    <property type="project" value="GO_Central"/>
</dbReference>
<dbReference type="GO" id="GO:0000494">
    <property type="term" value="P:box C/D sno(s)RNA 3'-end processing"/>
    <property type="evidence" value="ECO:0000318"/>
    <property type="project" value="GO_Central"/>
</dbReference>
<dbReference type="GO" id="GO:0031167">
    <property type="term" value="P:rRNA methylation"/>
    <property type="evidence" value="ECO:0000318"/>
    <property type="project" value="GO_Central"/>
</dbReference>
<dbReference type="CDD" id="cd02440">
    <property type="entry name" value="AdoMet_MTases"/>
    <property type="match status" value="1"/>
</dbReference>
<dbReference type="FunFam" id="3.30.200.20:FF:000056">
    <property type="entry name" value="Fibrillarin like 1"/>
    <property type="match status" value="1"/>
</dbReference>
<dbReference type="FunFam" id="3.40.50.150:FF:000001">
    <property type="entry name" value="Fibrillarin like 1"/>
    <property type="match status" value="1"/>
</dbReference>
<dbReference type="Gene3D" id="3.30.200.20">
    <property type="entry name" value="Phosphorylase Kinase, domain 1"/>
    <property type="match status" value="1"/>
</dbReference>
<dbReference type="Gene3D" id="3.40.50.150">
    <property type="entry name" value="Vaccinia Virus protein VP39"/>
    <property type="match status" value="1"/>
</dbReference>
<dbReference type="HAMAP" id="MF_00351">
    <property type="entry name" value="RNA_methyltransf_FlpA"/>
    <property type="match status" value="1"/>
</dbReference>
<dbReference type="InterPro" id="IPR000692">
    <property type="entry name" value="Fibrillarin"/>
</dbReference>
<dbReference type="InterPro" id="IPR020813">
    <property type="entry name" value="Fibrillarin_CS"/>
</dbReference>
<dbReference type="InterPro" id="IPR029063">
    <property type="entry name" value="SAM-dependent_MTases_sf"/>
</dbReference>
<dbReference type="NCBIfam" id="NF003276">
    <property type="entry name" value="PRK04266.1-2"/>
    <property type="match status" value="1"/>
</dbReference>
<dbReference type="PANTHER" id="PTHR10335:SF17">
    <property type="entry name" value="FIBRILLARIN"/>
    <property type="match status" value="1"/>
</dbReference>
<dbReference type="PANTHER" id="PTHR10335">
    <property type="entry name" value="RRNA 2-O-METHYLTRANSFERASE FIBRILLARIN"/>
    <property type="match status" value="1"/>
</dbReference>
<dbReference type="Pfam" id="PF01269">
    <property type="entry name" value="Fibrillarin"/>
    <property type="match status" value="1"/>
</dbReference>
<dbReference type="PIRSF" id="PIRSF006540">
    <property type="entry name" value="Nop17p"/>
    <property type="match status" value="1"/>
</dbReference>
<dbReference type="PRINTS" id="PR00052">
    <property type="entry name" value="FIBRILLARIN"/>
</dbReference>
<dbReference type="SMART" id="SM01206">
    <property type="entry name" value="Fibrillarin"/>
    <property type="match status" value="1"/>
</dbReference>
<dbReference type="SUPFAM" id="SSF53335">
    <property type="entry name" value="S-adenosyl-L-methionine-dependent methyltransferases"/>
    <property type="match status" value="1"/>
</dbReference>
<dbReference type="PROSITE" id="PS00566">
    <property type="entry name" value="FIBRILLARIN"/>
    <property type="match status" value="1"/>
</dbReference>
<accession>Q756P0</accession>